<keyword id="KW-0963">Cytoplasm</keyword>
<keyword id="KW-1185">Reference proteome</keyword>
<keyword id="KW-0819">tRNA processing</keyword>
<feature type="chain" id="PRO_0000234519" description="Protein TusB">
    <location>
        <begin position="1"/>
        <end position="95"/>
    </location>
</feature>
<reference key="1">
    <citation type="journal article" date="2001" name="Nature">
        <title>Complete genome sequence of Salmonella enterica serovar Typhimurium LT2.</title>
        <authorList>
            <person name="McClelland M."/>
            <person name="Sanderson K.E."/>
            <person name="Spieth J."/>
            <person name="Clifton S.W."/>
            <person name="Latreille P."/>
            <person name="Courtney L."/>
            <person name="Porwollik S."/>
            <person name="Ali J."/>
            <person name="Dante M."/>
            <person name="Du F."/>
            <person name="Hou S."/>
            <person name="Layman D."/>
            <person name="Leonard S."/>
            <person name="Nguyen C."/>
            <person name="Scott K."/>
            <person name="Holmes A."/>
            <person name="Grewal N."/>
            <person name="Mulvaney E."/>
            <person name="Ryan E."/>
            <person name="Sun H."/>
            <person name="Florea L."/>
            <person name="Miller W."/>
            <person name="Stoneking T."/>
            <person name="Nhan M."/>
            <person name="Waterston R."/>
            <person name="Wilson R.K."/>
        </authorList>
    </citation>
    <scope>NUCLEOTIDE SEQUENCE [LARGE SCALE GENOMIC DNA]</scope>
    <source>
        <strain>LT2 / SGSC1412 / ATCC 700720</strain>
    </source>
</reference>
<comment type="function">
    <text evidence="1">Part of a sulfur-relay system required for 2-thiolation of 5-methylaminomethyl-2-thiouridine (mnm(5)s(2)U) at tRNA wobble positions.</text>
</comment>
<comment type="subunit">
    <text evidence="1">Heterohexamer, formed by a dimer of trimers. The hexameric TusBCD complex contains 2 copies each of TusB, TusC and TusD. The TusBCD complex interacts with TusE.</text>
</comment>
<comment type="subcellular location">
    <subcellularLocation>
        <location evidence="1">Cytoplasm</location>
    </subcellularLocation>
</comment>
<comment type="similarity">
    <text evidence="1">Belongs to the DsrH/TusB family.</text>
</comment>
<evidence type="ECO:0000255" key="1">
    <source>
        <dbReference type="HAMAP-Rule" id="MF_01564"/>
    </source>
</evidence>
<name>TUSB_SALTY</name>
<gene>
    <name evidence="1" type="primary">tusB</name>
    <name type="ordered locus">STM3449</name>
</gene>
<organism>
    <name type="scientific">Salmonella typhimurium (strain LT2 / SGSC1412 / ATCC 700720)</name>
    <dbReference type="NCBI Taxonomy" id="99287"/>
    <lineage>
        <taxon>Bacteria</taxon>
        <taxon>Pseudomonadati</taxon>
        <taxon>Pseudomonadota</taxon>
        <taxon>Gammaproteobacteria</taxon>
        <taxon>Enterobacterales</taxon>
        <taxon>Enterobacteriaceae</taxon>
        <taxon>Salmonella</taxon>
    </lineage>
</organism>
<accession>Q8ZLL9</accession>
<dbReference type="EMBL" id="AE006468">
    <property type="protein sequence ID" value="AAL22312.1"/>
    <property type="molecule type" value="Genomic_DNA"/>
</dbReference>
<dbReference type="RefSeq" id="WP_000903400.1">
    <property type="nucleotide sequence ID" value="NC_003197.2"/>
</dbReference>
<dbReference type="SMR" id="Q8ZLL9"/>
<dbReference type="STRING" id="99287.STM3449"/>
<dbReference type="PaxDb" id="99287-STM3449"/>
<dbReference type="KEGG" id="stm:STM3449"/>
<dbReference type="PATRIC" id="fig|99287.12.peg.3646"/>
<dbReference type="HOGENOM" id="CLU_166087_2_1_6"/>
<dbReference type="OMA" id="MLHTINK"/>
<dbReference type="PhylomeDB" id="Q8ZLL9"/>
<dbReference type="BioCyc" id="SENT99287:STM3449-MONOMER"/>
<dbReference type="Proteomes" id="UP000001014">
    <property type="component" value="Chromosome"/>
</dbReference>
<dbReference type="GO" id="GO:1990228">
    <property type="term" value="C:sulfurtransferase complex"/>
    <property type="evidence" value="ECO:0000318"/>
    <property type="project" value="GO_Central"/>
</dbReference>
<dbReference type="GO" id="GO:0002143">
    <property type="term" value="P:tRNA wobble position uridine thiolation"/>
    <property type="evidence" value="ECO:0000318"/>
    <property type="project" value="GO_Central"/>
</dbReference>
<dbReference type="FunFam" id="3.40.1260.10:FF:000002">
    <property type="entry name" value="Sulfurtransferase TusB"/>
    <property type="match status" value="1"/>
</dbReference>
<dbReference type="Gene3D" id="3.40.1260.10">
    <property type="entry name" value="DsrEFH-like"/>
    <property type="match status" value="1"/>
</dbReference>
<dbReference type="HAMAP" id="MF_01564">
    <property type="entry name" value="Thiourid_synth_B"/>
    <property type="match status" value="1"/>
</dbReference>
<dbReference type="InterPro" id="IPR027396">
    <property type="entry name" value="DsrEFH-like"/>
</dbReference>
<dbReference type="InterPro" id="IPR023526">
    <property type="entry name" value="Sulphur_relay_TusB"/>
</dbReference>
<dbReference type="InterPro" id="IPR007215">
    <property type="entry name" value="Sulphur_relay_TusB/DsrH"/>
</dbReference>
<dbReference type="NCBIfam" id="NF010035">
    <property type="entry name" value="PRK13510.1"/>
    <property type="match status" value="1"/>
</dbReference>
<dbReference type="NCBIfam" id="TIGR03011">
    <property type="entry name" value="sulf_tusB_dsrH"/>
    <property type="match status" value="1"/>
</dbReference>
<dbReference type="PANTHER" id="PTHR37526">
    <property type="entry name" value="PROTEIN TUSB"/>
    <property type="match status" value="1"/>
</dbReference>
<dbReference type="PANTHER" id="PTHR37526:SF1">
    <property type="entry name" value="PROTEIN TUSB"/>
    <property type="match status" value="1"/>
</dbReference>
<dbReference type="Pfam" id="PF04077">
    <property type="entry name" value="DsrH"/>
    <property type="match status" value="1"/>
</dbReference>
<dbReference type="SUPFAM" id="SSF75169">
    <property type="entry name" value="DsrEFH-like"/>
    <property type="match status" value="1"/>
</dbReference>
<protein>
    <recommendedName>
        <fullName evidence="1">Protein TusB</fullName>
    </recommendedName>
    <alternativeName>
        <fullName evidence="1">tRNA 2-thiouridine synthesizing protein B</fullName>
    </alternativeName>
</protein>
<sequence length="95" mass="10532">MLHTLPHCASSVDFPALLRLLKEGDALLLLQDGVTVAIEGNRFLESLRDAPITVYALKEDIDARGLGGQISDSVVRVDYTEFVRLTVKYANQMAW</sequence>
<proteinExistence type="inferred from homology"/>